<reference key="1">
    <citation type="journal article" date="2002" name="Nature">
        <title>Comparison of the genomes of two Xanthomonas pathogens with differing host specificities.</title>
        <authorList>
            <person name="da Silva A.C.R."/>
            <person name="Ferro J.A."/>
            <person name="Reinach F.C."/>
            <person name="Farah C.S."/>
            <person name="Furlan L.R."/>
            <person name="Quaggio R.B."/>
            <person name="Monteiro-Vitorello C.B."/>
            <person name="Van Sluys M.A."/>
            <person name="Almeida N.F. Jr."/>
            <person name="Alves L.M.C."/>
            <person name="do Amaral A.M."/>
            <person name="Bertolini M.C."/>
            <person name="Camargo L.E.A."/>
            <person name="Camarotte G."/>
            <person name="Cannavan F."/>
            <person name="Cardozo J."/>
            <person name="Chambergo F."/>
            <person name="Ciapina L.P."/>
            <person name="Cicarelli R.M.B."/>
            <person name="Coutinho L.L."/>
            <person name="Cursino-Santos J.R."/>
            <person name="El-Dorry H."/>
            <person name="Faria J.B."/>
            <person name="Ferreira A.J.S."/>
            <person name="Ferreira R.C.C."/>
            <person name="Ferro M.I.T."/>
            <person name="Formighieri E.F."/>
            <person name="Franco M.C."/>
            <person name="Greggio C.C."/>
            <person name="Gruber A."/>
            <person name="Katsuyama A.M."/>
            <person name="Kishi L.T."/>
            <person name="Leite R.P."/>
            <person name="Lemos E.G.M."/>
            <person name="Lemos M.V.F."/>
            <person name="Locali E.C."/>
            <person name="Machado M.A."/>
            <person name="Madeira A.M.B.N."/>
            <person name="Martinez-Rossi N.M."/>
            <person name="Martins E.C."/>
            <person name="Meidanis J."/>
            <person name="Menck C.F.M."/>
            <person name="Miyaki C.Y."/>
            <person name="Moon D.H."/>
            <person name="Moreira L.M."/>
            <person name="Novo M.T.M."/>
            <person name="Okura V.K."/>
            <person name="Oliveira M.C."/>
            <person name="Oliveira V.R."/>
            <person name="Pereira H.A."/>
            <person name="Rossi A."/>
            <person name="Sena J.A.D."/>
            <person name="Silva C."/>
            <person name="de Souza R.F."/>
            <person name="Spinola L.A.F."/>
            <person name="Takita M.A."/>
            <person name="Tamura R.E."/>
            <person name="Teixeira E.C."/>
            <person name="Tezza R.I.D."/>
            <person name="Trindade dos Santos M."/>
            <person name="Truffi D."/>
            <person name="Tsai S.M."/>
            <person name="White F.F."/>
            <person name="Setubal J.C."/>
            <person name="Kitajima J.P."/>
        </authorList>
    </citation>
    <scope>NUCLEOTIDE SEQUENCE [LARGE SCALE GENOMIC DNA]</scope>
    <source>
        <strain>ATCC 33913 / DSM 3586 / NCPPB 528 / LMG 568 / P 25</strain>
    </source>
</reference>
<evidence type="ECO:0000255" key="1">
    <source>
        <dbReference type="HAMAP-Rule" id="MF_00817"/>
    </source>
</evidence>
<dbReference type="EC" id="1.7.1.13" evidence="1"/>
<dbReference type="EMBL" id="AE008922">
    <property type="protein sequence ID" value="AAM43031.1"/>
    <property type="molecule type" value="Genomic_DNA"/>
</dbReference>
<dbReference type="RefSeq" id="NP_639130.1">
    <property type="nucleotide sequence ID" value="NC_003902.1"/>
</dbReference>
<dbReference type="RefSeq" id="WP_011038866.1">
    <property type="nucleotide sequence ID" value="NC_003902.1"/>
</dbReference>
<dbReference type="SMR" id="Q8P4C5"/>
<dbReference type="STRING" id="190485.XCC3785"/>
<dbReference type="EnsemblBacteria" id="AAM43031">
    <property type="protein sequence ID" value="AAM43031"/>
    <property type="gene ID" value="XCC3785"/>
</dbReference>
<dbReference type="KEGG" id="xcc:XCC3785"/>
<dbReference type="PATRIC" id="fig|190485.4.peg.4052"/>
<dbReference type="eggNOG" id="COG0780">
    <property type="taxonomic scope" value="Bacteria"/>
</dbReference>
<dbReference type="eggNOG" id="COG2904">
    <property type="taxonomic scope" value="Bacteria"/>
</dbReference>
<dbReference type="HOGENOM" id="CLU_054738_0_0_6"/>
<dbReference type="OrthoDB" id="9789995at2"/>
<dbReference type="UniPathway" id="UPA00392"/>
<dbReference type="Proteomes" id="UP000001010">
    <property type="component" value="Chromosome"/>
</dbReference>
<dbReference type="GO" id="GO:0005829">
    <property type="term" value="C:cytosol"/>
    <property type="evidence" value="ECO:0000318"/>
    <property type="project" value="GO_Central"/>
</dbReference>
<dbReference type="GO" id="GO:0033739">
    <property type="term" value="F:preQ1 synthase activity"/>
    <property type="evidence" value="ECO:0000318"/>
    <property type="project" value="GO_Central"/>
</dbReference>
<dbReference type="GO" id="GO:0008616">
    <property type="term" value="P:queuosine biosynthetic process"/>
    <property type="evidence" value="ECO:0000318"/>
    <property type="project" value="GO_Central"/>
</dbReference>
<dbReference type="GO" id="GO:0006400">
    <property type="term" value="P:tRNA modification"/>
    <property type="evidence" value="ECO:0007669"/>
    <property type="project" value="UniProtKB-UniRule"/>
</dbReference>
<dbReference type="Gene3D" id="3.30.1130.10">
    <property type="match status" value="2"/>
</dbReference>
<dbReference type="HAMAP" id="MF_00817">
    <property type="entry name" value="QueF_type2"/>
    <property type="match status" value="1"/>
</dbReference>
<dbReference type="InterPro" id="IPR043133">
    <property type="entry name" value="GTP-CH-I_C/QueF"/>
</dbReference>
<dbReference type="InterPro" id="IPR050084">
    <property type="entry name" value="NADPH_dep_7-cyano-7-deazaG_red"/>
</dbReference>
<dbReference type="InterPro" id="IPR029500">
    <property type="entry name" value="QueF"/>
</dbReference>
<dbReference type="InterPro" id="IPR029139">
    <property type="entry name" value="QueF_N"/>
</dbReference>
<dbReference type="InterPro" id="IPR016428">
    <property type="entry name" value="QueF_type2"/>
</dbReference>
<dbReference type="NCBIfam" id="TIGR03138">
    <property type="entry name" value="QueF"/>
    <property type="match status" value="1"/>
</dbReference>
<dbReference type="PANTHER" id="PTHR34354">
    <property type="entry name" value="NADPH-DEPENDENT 7-CYANO-7-DEAZAGUANINE REDUCTASE"/>
    <property type="match status" value="1"/>
</dbReference>
<dbReference type="PANTHER" id="PTHR34354:SF1">
    <property type="entry name" value="NADPH-DEPENDENT 7-CYANO-7-DEAZAGUANINE REDUCTASE"/>
    <property type="match status" value="1"/>
</dbReference>
<dbReference type="Pfam" id="PF14489">
    <property type="entry name" value="QueF"/>
    <property type="match status" value="1"/>
</dbReference>
<dbReference type="Pfam" id="PF14819">
    <property type="entry name" value="QueF_N"/>
    <property type="match status" value="1"/>
</dbReference>
<dbReference type="PIRSF" id="PIRSF004750">
    <property type="entry name" value="Nitrile_oxidored_YqcD_prd"/>
    <property type="match status" value="1"/>
</dbReference>
<dbReference type="SUPFAM" id="SSF55620">
    <property type="entry name" value="Tetrahydrobiopterin biosynthesis enzymes-like"/>
    <property type="match status" value="1"/>
</dbReference>
<keyword id="KW-0963">Cytoplasm</keyword>
<keyword id="KW-0521">NADP</keyword>
<keyword id="KW-0560">Oxidoreductase</keyword>
<keyword id="KW-0671">Queuosine biosynthesis</keyword>
<keyword id="KW-1185">Reference proteome</keyword>
<feature type="chain" id="PRO_0000163068" description="NADPH-dependent 7-cyano-7-deazaguanine reductase">
    <location>
        <begin position="1"/>
        <end position="271"/>
    </location>
</feature>
<feature type="active site" description="Thioimide intermediate" evidence="1">
    <location>
        <position position="177"/>
    </location>
</feature>
<feature type="active site" description="Proton donor" evidence="1">
    <location>
        <position position="184"/>
    </location>
</feature>
<feature type="binding site" evidence="1">
    <location>
        <begin position="81"/>
        <end position="83"/>
    </location>
    <ligand>
        <name>substrate</name>
    </ligand>
</feature>
<feature type="binding site" evidence="1">
    <location>
        <begin position="83"/>
        <end position="84"/>
    </location>
    <ligand>
        <name>NADPH</name>
        <dbReference type="ChEBI" id="CHEBI:57783"/>
    </ligand>
</feature>
<feature type="binding site" evidence="1">
    <location>
        <begin position="216"/>
        <end position="217"/>
    </location>
    <ligand>
        <name>substrate</name>
    </ligand>
</feature>
<feature type="binding site" evidence="1">
    <location>
        <begin position="245"/>
        <end position="246"/>
    </location>
    <ligand>
        <name>NADPH</name>
        <dbReference type="ChEBI" id="CHEBI:57783"/>
    </ligand>
</feature>
<accession>Q8P4C5</accession>
<sequence>MNTPEDSSLGREVAYPSGYDPSLLFPIPRAAGRAAIGLRGALPFVGRDRWHAYELSWLDAHGKPCVATATLHVPCESPALIESKSLKLYLNSLNATRFNSAEAVRARIATDLSTRAGADVSVEFGLPPIDAVGEGESIDALDIAIDDYGPPKADYLATHAGTVVEEVLASALLKSNCPVTGQPDWASVTLRYRGAPIDREGLLRYLVSFRDHADFHEQCVERIFQDLLVRCAPQWLVVEARYTRRGGLDINPVRTSPQMPTPLSIFRDLRQ</sequence>
<proteinExistence type="inferred from homology"/>
<protein>
    <recommendedName>
        <fullName evidence="1">NADPH-dependent 7-cyano-7-deazaguanine reductase</fullName>
        <ecNumber evidence="1">1.7.1.13</ecNumber>
    </recommendedName>
    <alternativeName>
        <fullName evidence="1">7-cyano-7-carbaguanine reductase</fullName>
    </alternativeName>
    <alternativeName>
        <fullName evidence="1">NADPH-dependent nitrile oxidoreductase</fullName>
    </alternativeName>
    <alternativeName>
        <fullName evidence="1">PreQ(0) reductase</fullName>
    </alternativeName>
</protein>
<comment type="function">
    <text evidence="1">Catalyzes the NADPH-dependent reduction of 7-cyano-7-deazaguanine (preQ0) to 7-aminomethyl-7-deazaguanine (preQ1).</text>
</comment>
<comment type="catalytic activity">
    <reaction evidence="1">
        <text>7-aminomethyl-7-carbaguanine + 2 NADP(+) = 7-cyano-7-deazaguanine + 2 NADPH + 3 H(+)</text>
        <dbReference type="Rhea" id="RHEA:13409"/>
        <dbReference type="ChEBI" id="CHEBI:15378"/>
        <dbReference type="ChEBI" id="CHEBI:45075"/>
        <dbReference type="ChEBI" id="CHEBI:57783"/>
        <dbReference type="ChEBI" id="CHEBI:58349"/>
        <dbReference type="ChEBI" id="CHEBI:58703"/>
        <dbReference type="EC" id="1.7.1.13"/>
    </reaction>
</comment>
<comment type="pathway">
    <text evidence="1">tRNA modification; tRNA-queuosine biosynthesis.</text>
</comment>
<comment type="subunit">
    <text evidence="1">Homodimer.</text>
</comment>
<comment type="subcellular location">
    <subcellularLocation>
        <location evidence="1">Cytoplasm</location>
    </subcellularLocation>
</comment>
<comment type="similarity">
    <text evidence="1">Belongs to the GTP cyclohydrolase I family. QueF type 2 subfamily.</text>
</comment>
<organism>
    <name type="scientific">Xanthomonas campestris pv. campestris (strain ATCC 33913 / DSM 3586 / NCPPB 528 / LMG 568 / P 25)</name>
    <dbReference type="NCBI Taxonomy" id="190485"/>
    <lineage>
        <taxon>Bacteria</taxon>
        <taxon>Pseudomonadati</taxon>
        <taxon>Pseudomonadota</taxon>
        <taxon>Gammaproteobacteria</taxon>
        <taxon>Lysobacterales</taxon>
        <taxon>Lysobacteraceae</taxon>
        <taxon>Xanthomonas</taxon>
    </lineage>
</organism>
<gene>
    <name evidence="1" type="primary">queF</name>
    <name type="ordered locus">XCC3785</name>
</gene>
<name>QUEF_XANCP</name>